<proteinExistence type="evidence at protein level"/>
<keyword id="KW-0002">3D-structure</keyword>
<keyword id="KW-1003">Cell membrane</keyword>
<keyword id="KW-0145">Chemotaxis</keyword>
<keyword id="KW-1015">Disulfide bond</keyword>
<keyword id="KW-0297">G-protein coupled receptor</keyword>
<keyword id="KW-0325">Glycoprotein</keyword>
<keyword id="KW-0472">Membrane</keyword>
<keyword id="KW-1267">Proteomics identification</keyword>
<keyword id="KW-0675">Receptor</keyword>
<keyword id="KW-1185">Reference proteome</keyword>
<keyword id="KW-0807">Transducer</keyword>
<keyword id="KW-0812">Transmembrane</keyword>
<keyword id="KW-1133">Transmembrane helix</keyword>
<comment type="function">
    <text evidence="4 5 6 7">Receptor for platelet activating factor, a chemotactic phospholipid mediator that possesses potent inflammatory, smooth-muscle contractile and hypotensive activity. Seems to mediate its action via a G protein that activates a phosphatidylinositol-calcium second messenger system.</text>
</comment>
<comment type="subunit">
    <text evidence="8">Interacts with ARRB1.</text>
</comment>
<comment type="interaction">
    <interactant intactId="EBI-3906092">
        <id>P25105</id>
    </interactant>
    <interactant intactId="EBI-702142">
        <id>Q05397</id>
        <label>PTK2</label>
    </interactant>
    <organismsDiffer>false</organismsDiffer>
    <experiments>2</experiments>
</comment>
<comment type="subcellular location">
    <subcellularLocation>
        <location evidence="5">Cell membrane</location>
        <topology evidence="5">Multi-pass membrane protein</topology>
    </subcellularLocation>
</comment>
<comment type="tissue specificity">
    <text evidence="4 6 7">Expressed in the placenta, lung, left and right heart ventricles, heart atrium, leukocytes and differentiated HL-60 granulocytes.</text>
</comment>
<comment type="induction">
    <text evidence="7">By CSF2/GM-CSF, IL5/interleukin-5 and n-butyrate.</text>
</comment>
<comment type="similarity">
    <text evidence="2">Belongs to the G-protein coupled receptor 1 family.</text>
</comment>
<accession>P25105</accession>
<accession>A3KMC8</accession>
<accession>A8K2H5</accession>
<evidence type="ECO:0000255" key="1"/>
<evidence type="ECO:0000255" key="2">
    <source>
        <dbReference type="PROSITE-ProRule" id="PRU00521"/>
    </source>
</evidence>
<evidence type="ECO:0000269" key="3">
    <source>
    </source>
</evidence>
<evidence type="ECO:0000269" key="4">
    <source>
    </source>
</evidence>
<evidence type="ECO:0000269" key="5">
    <source>
    </source>
</evidence>
<evidence type="ECO:0000269" key="6">
    <source>
    </source>
</evidence>
<evidence type="ECO:0000269" key="7">
    <source>
    </source>
</evidence>
<evidence type="ECO:0000269" key="8">
    <source>
    </source>
</evidence>
<evidence type="ECO:0000305" key="9"/>
<evidence type="ECO:0007829" key="10">
    <source>
        <dbReference type="PDB" id="5ZKP"/>
    </source>
</evidence>
<evidence type="ECO:0007829" key="11">
    <source>
        <dbReference type="PDB" id="5ZKQ"/>
    </source>
</evidence>
<evidence type="ECO:0007829" key="12">
    <source>
        <dbReference type="PDB" id="8XYD"/>
    </source>
</evidence>
<name>PTAFR_HUMAN</name>
<organism>
    <name type="scientific">Homo sapiens</name>
    <name type="common">Human</name>
    <dbReference type="NCBI Taxonomy" id="9606"/>
    <lineage>
        <taxon>Eukaryota</taxon>
        <taxon>Metazoa</taxon>
        <taxon>Chordata</taxon>
        <taxon>Craniata</taxon>
        <taxon>Vertebrata</taxon>
        <taxon>Euteleostomi</taxon>
        <taxon>Mammalia</taxon>
        <taxon>Eutheria</taxon>
        <taxon>Euarchontoglires</taxon>
        <taxon>Primates</taxon>
        <taxon>Haplorrhini</taxon>
        <taxon>Catarrhini</taxon>
        <taxon>Hominidae</taxon>
        <taxon>Homo</taxon>
    </lineage>
</organism>
<protein>
    <recommendedName>
        <fullName>Platelet-activating factor receptor</fullName>
        <shortName>PAF-R</shortName>
        <shortName>PAFr</shortName>
    </recommendedName>
</protein>
<feature type="chain" id="PRO_0000070092" description="Platelet-activating factor receptor">
    <location>
        <begin position="1"/>
        <end position="342"/>
    </location>
</feature>
<feature type="topological domain" description="Extracellular" evidence="1">
    <location>
        <begin position="1"/>
        <end position="16"/>
    </location>
</feature>
<feature type="transmembrane region" description="Helical; Name=1" evidence="1">
    <location>
        <begin position="17"/>
        <end position="38"/>
    </location>
</feature>
<feature type="topological domain" description="Cytoplasmic" evidence="1">
    <location>
        <begin position="39"/>
        <end position="54"/>
    </location>
</feature>
<feature type="transmembrane region" description="Helical; Name=2" evidence="1">
    <location>
        <begin position="55"/>
        <end position="74"/>
    </location>
</feature>
<feature type="topological domain" description="Extracellular" evidence="1">
    <location>
        <begin position="75"/>
        <end position="91"/>
    </location>
</feature>
<feature type="transmembrane region" description="Helical; Name=3" evidence="1">
    <location>
        <begin position="92"/>
        <end position="113"/>
    </location>
</feature>
<feature type="topological domain" description="Cytoplasmic" evidence="1">
    <location>
        <begin position="114"/>
        <end position="133"/>
    </location>
</feature>
<feature type="transmembrane region" description="Helical; Name=4" evidence="1">
    <location>
        <begin position="134"/>
        <end position="155"/>
    </location>
</feature>
<feature type="topological domain" description="Extracellular" evidence="1">
    <location>
        <begin position="156"/>
        <end position="184"/>
    </location>
</feature>
<feature type="transmembrane region" description="Helical; Name=5" evidence="1">
    <location>
        <begin position="185"/>
        <end position="205"/>
    </location>
</feature>
<feature type="topological domain" description="Cytoplasmic" evidence="1">
    <location>
        <begin position="206"/>
        <end position="233"/>
    </location>
</feature>
<feature type="transmembrane region" description="Helical; Name=6" evidence="1">
    <location>
        <begin position="234"/>
        <end position="254"/>
    </location>
</feature>
<feature type="topological domain" description="Extracellular" evidence="1">
    <location>
        <begin position="255"/>
        <end position="276"/>
    </location>
</feature>
<feature type="transmembrane region" description="Helical; Name=7" evidence="1">
    <location>
        <begin position="277"/>
        <end position="296"/>
    </location>
</feature>
<feature type="topological domain" description="Cytoplasmic" evidence="1">
    <location>
        <begin position="297"/>
        <end position="342"/>
    </location>
</feature>
<feature type="glycosylation site" description="N-linked (GlcNAc...) asparagine" evidence="1">
    <location>
        <position position="169"/>
    </location>
</feature>
<feature type="disulfide bond" evidence="2">
    <location>
        <begin position="90"/>
        <end position="173"/>
    </location>
</feature>
<feature type="sequence variant" id="VAR_011851" description="In dbSNP:rs5938." evidence="3">
    <original>A</original>
    <variation>D</variation>
    <location>
        <position position="224"/>
    </location>
</feature>
<feature type="sequence variant" id="VAR_011852" description="In dbSNP:rs5939." evidence="3">
    <original>N</original>
    <variation>S</variation>
    <location>
        <position position="338"/>
    </location>
</feature>
<feature type="sequence conflict" description="In Ref. 6; AAA60108." evidence="9" ref="6">
    <original>L</original>
    <variation>P</variation>
    <location>
        <position position="28"/>
    </location>
</feature>
<feature type="sequence conflict" description="In Ref. 6; AAA60108." evidence="9" ref="6">
    <original>F</original>
    <variation>L</variation>
    <location>
        <position position="66"/>
    </location>
</feature>
<feature type="sequence conflict" description="In Ref. 6; AAA60108." evidence="9" ref="6">
    <original>C</original>
    <variation>R</variation>
    <location>
        <position position="95"/>
    </location>
</feature>
<feature type="sequence conflict" description="In Ref. 4; AAA60214." evidence="9" ref="4">
    <original>KR</original>
    <variation>TG</variation>
    <location>
        <begin position="227"/>
        <end position="228"/>
    </location>
</feature>
<feature type="sequence conflict" description="In Ref. 6; AAA60108." evidence="9" ref="6">
    <original>KR</original>
    <variation>TT</variation>
    <location>
        <begin position="227"/>
        <end position="228"/>
    </location>
</feature>
<feature type="sequence conflict" description="In Ref. 6; AAA60108." evidence="9" ref="6">
    <original>P</original>
    <variation>A</variation>
    <location>
        <position position="247"/>
    </location>
</feature>
<feature type="sequence conflict" description="In Ref. 5; AAB24695." evidence="9" ref="5">
    <original>K</original>
    <variation>N</variation>
    <location>
        <position position="316"/>
    </location>
</feature>
<feature type="helix" evidence="11">
    <location>
        <begin position="5"/>
        <end position="10"/>
    </location>
</feature>
<feature type="helix" evidence="10">
    <location>
        <begin position="14"/>
        <end position="43"/>
    </location>
</feature>
<feature type="helix" evidence="10">
    <location>
        <begin position="47"/>
        <end position="49"/>
    </location>
</feature>
<feature type="helix" evidence="10">
    <location>
        <begin position="50"/>
        <end position="67"/>
    </location>
</feature>
<feature type="helix" evidence="10">
    <location>
        <begin position="70"/>
        <end position="78"/>
    </location>
</feature>
<feature type="turn" evidence="12">
    <location>
        <begin position="79"/>
        <end position="81"/>
    </location>
</feature>
<feature type="helix" evidence="10">
    <location>
        <begin position="87"/>
        <end position="119"/>
    </location>
</feature>
<feature type="helix" evidence="12">
    <location>
        <begin position="122"/>
        <end position="126"/>
    </location>
</feature>
<feature type="helix" evidence="10">
    <location>
        <begin position="142"/>
        <end position="154"/>
    </location>
</feature>
<feature type="strand" evidence="10">
    <location>
        <begin position="158"/>
        <end position="162"/>
    </location>
</feature>
<feature type="strand" evidence="10">
    <location>
        <begin position="164"/>
        <end position="174"/>
    </location>
</feature>
<feature type="turn" evidence="10">
    <location>
        <begin position="179"/>
        <end position="181"/>
    </location>
</feature>
<feature type="helix" evidence="10">
    <location>
        <begin position="184"/>
        <end position="214"/>
    </location>
</feature>
<feature type="helix" evidence="10">
    <location>
        <begin position="224"/>
        <end position="243"/>
    </location>
</feature>
<feature type="helix" evidence="10">
    <location>
        <begin position="245"/>
        <end position="260"/>
    </location>
</feature>
<feature type="helix" evidence="10">
    <location>
        <begin position="265"/>
        <end position="282"/>
    </location>
</feature>
<feature type="helix" evidence="10">
    <location>
        <begin position="285"/>
        <end position="312"/>
    </location>
</feature>
<sequence length="342" mass="39203">MEPHDSSHMDSEFRYTLFPIVYSIIFVLGVIANGYVLWVFARLYPCKKFNEIKIFMVNLTMADMLFLITLPLWIVYYQNQGNWILPKFLCNVAGCLFFINTYCSVAFLGVITYNRFQAVTRPIKTAQANTRKRGISLSLVIWVAIVGAASYFLILDSTNTVPDSAGSGNVTRCFEHYEKGSVPVLIIHIFIVFSFFLVFLIILFCNLVIIRTLLMQPVQQQRNAEVKRRALWMVCTVLAVFIICFVPHHVVQLPWTLAELGFQDSKFHQAINDAHQVTLCLLSTNCVLDPVIYCFLTKKFRKHLTEKFYSMRSSRKCSRATTDTVTEVVVPFNQIPGNSLKN</sequence>
<reference key="1">
    <citation type="journal article" date="1991" name="Biochem. Biophys. Res. Commun.">
        <title>Characterization of a human cDNA that encodes a functional receptor for platelet activating factor.</title>
        <authorList>
            <person name="Ye R.D."/>
            <person name="Prossnitz E.R."/>
            <person name="Zou A."/>
            <person name="Cochrane C.G."/>
        </authorList>
    </citation>
    <scope>NUCLEOTIDE SEQUENCE [MRNA]</scope>
    <scope>FUNCTION</scope>
    <scope>TISSUE SPECIFICITY</scope>
    <source>
        <tissue>Granulocyte</tissue>
    </source>
</reference>
<reference key="2">
    <citation type="journal article" date="1991" name="J. Biol. Chem.">
        <title>Molecular cloning and expression of platelet-activating factor receptor from human leukocytes.</title>
        <authorList>
            <person name="Nakamura M."/>
            <person name="Honda Z."/>
            <person name="Izumi T."/>
            <person name="Sakanaka C."/>
            <person name="Mutoh H."/>
            <person name="Minami M."/>
            <person name="Bito H."/>
            <person name="Seyama Y."/>
            <person name="Matsumoto T."/>
            <person name="Noma M."/>
            <person name="Shimizu T."/>
        </authorList>
    </citation>
    <scope>NUCLEOTIDE SEQUENCE [MRNA]</scope>
    <scope>FUNCTION</scope>
    <scope>TISSUE SPECIFICITY</scope>
    <scope>INDUCTION</scope>
    <source>
        <tissue>Leukocyte</tissue>
    </source>
</reference>
<reference key="3">
    <citation type="journal article" date="1992" name="J. Biol. Chem.">
        <title>The human leukocyte platelet-activating factor receptor. cDNA cloning, cell surface expression, and construction of a novel epitope-bearing analog.</title>
        <authorList>
            <person name="Kunz D."/>
            <person name="Gerard N.P."/>
            <person name="Gerard C."/>
        </authorList>
    </citation>
    <scope>NUCLEOTIDE SEQUENCE [MRNA]</scope>
    <scope>FUNCTION</scope>
    <scope>SUBCELLULAR LOCATION</scope>
    <source>
        <tissue>Leukocyte</tissue>
    </source>
</reference>
<reference key="4">
    <citation type="journal article" date="1992" name="Genomics">
        <title>The human platelet-activating factor receptor gene (PTAFR) contains no introns and maps to chromosome 1.</title>
        <authorList>
            <person name="Seyfried C.E."/>
            <person name="Schweickart V.L."/>
            <person name="Godiska R."/>
            <person name="Gray P.W."/>
        </authorList>
    </citation>
    <scope>NUCLEOTIDE SEQUENCE [GENOMIC DNA]</scope>
    <source>
        <tissue>Fetal liver</tissue>
    </source>
</reference>
<reference key="5">
    <citation type="journal article" date="1992" name="Biochem. Biophys. Res. Commun.">
        <title>Molecular cloning and characterization of the platelet-activating factor receptor gene expressed in the human heart.</title>
        <authorList>
            <person name="Sugimoto T."/>
            <person name="Tsuchimochi H."/>
            <person name="McGregor C.G.A."/>
            <person name="Mutoh H."/>
            <person name="Shimizu T."/>
            <person name="Kurachi Y."/>
        </authorList>
    </citation>
    <scope>NUCLEOTIDE SEQUENCE [MRNA]</scope>
    <scope>FUNCTION</scope>
    <scope>TISSUE SPECIFICITY</scope>
    <source>
        <tissue>Heart ventricle</tissue>
    </source>
</reference>
<reference key="6">
    <citation type="submission" date="1992-12" db="EMBL/GenBank/DDBJ databases">
        <title>Nucleotide sequence of platelet-activating-factor receptor derived from HeLa cell genomic DNA and Rhesus monkey genomic DNA.</title>
        <authorList>
            <person name="Behal R.H."/>
            <person name="Debuysere M.S."/>
            <person name="Olson M.S."/>
        </authorList>
    </citation>
    <scope>NUCLEOTIDE SEQUENCE [MRNA]</scope>
    <source>
        <tissue>Cervix carcinoma</tissue>
    </source>
</reference>
<reference key="7">
    <citation type="journal article" date="1993" name="Am. J. Respir. Cell Mol. Biol.">
        <title>Cloning of a human platelet-activating factor receptor gene: evidence for an intron in the 5'-untranslated region.</title>
        <authorList>
            <person name="Chase P.B."/>
            <person name="Halonen M."/>
            <person name="Regan J.W."/>
        </authorList>
    </citation>
    <scope>NUCLEOTIDE SEQUENCE [GENOMIC DNA]</scope>
</reference>
<reference key="8">
    <citation type="submission" date="2003-04" db="EMBL/GenBank/DDBJ databases">
        <title>cDNA clones of human proteins involved in signal transduction sequenced by the Guthrie cDNA resource center (www.cdna.org).</title>
        <authorList>
            <person name="Warren C.N."/>
            <person name="Aronstam R.S."/>
            <person name="Sharma S.V."/>
        </authorList>
    </citation>
    <scope>NUCLEOTIDE SEQUENCE [LARGE SCALE MRNA]</scope>
    <source>
        <tissue>Placenta</tissue>
    </source>
</reference>
<reference key="9">
    <citation type="submission" date="2003-08" db="EMBL/GenBank/DDBJ databases">
        <title>Cloning of human full-length CDSs in BD Creator(TM) system donor vector.</title>
        <authorList>
            <person name="Kalnine N."/>
            <person name="Chen X."/>
            <person name="Rolfs A."/>
            <person name="Halleck A."/>
            <person name="Hines L."/>
            <person name="Eisenstein S."/>
            <person name="Koundinya M."/>
            <person name="Raphael J."/>
            <person name="Moreira D."/>
            <person name="Kelley T."/>
            <person name="LaBaer J."/>
            <person name="Lin Y."/>
            <person name="Phelan M."/>
            <person name="Farmer A."/>
        </authorList>
    </citation>
    <scope>NUCLEOTIDE SEQUENCE [LARGE SCALE MRNA]</scope>
</reference>
<reference key="10">
    <citation type="journal article" date="2004" name="Nat. Genet.">
        <title>Complete sequencing and characterization of 21,243 full-length human cDNAs.</title>
        <authorList>
            <person name="Ota T."/>
            <person name="Suzuki Y."/>
            <person name="Nishikawa T."/>
            <person name="Otsuki T."/>
            <person name="Sugiyama T."/>
            <person name="Irie R."/>
            <person name="Wakamatsu A."/>
            <person name="Hayashi K."/>
            <person name="Sato H."/>
            <person name="Nagai K."/>
            <person name="Kimura K."/>
            <person name="Makita H."/>
            <person name="Sekine M."/>
            <person name="Obayashi M."/>
            <person name="Nishi T."/>
            <person name="Shibahara T."/>
            <person name="Tanaka T."/>
            <person name="Ishii S."/>
            <person name="Yamamoto J."/>
            <person name="Saito K."/>
            <person name="Kawai Y."/>
            <person name="Isono Y."/>
            <person name="Nakamura Y."/>
            <person name="Nagahari K."/>
            <person name="Murakami K."/>
            <person name="Yasuda T."/>
            <person name="Iwayanagi T."/>
            <person name="Wagatsuma M."/>
            <person name="Shiratori A."/>
            <person name="Sudo H."/>
            <person name="Hosoiri T."/>
            <person name="Kaku Y."/>
            <person name="Kodaira H."/>
            <person name="Kondo H."/>
            <person name="Sugawara M."/>
            <person name="Takahashi M."/>
            <person name="Kanda K."/>
            <person name="Yokoi T."/>
            <person name="Furuya T."/>
            <person name="Kikkawa E."/>
            <person name="Omura Y."/>
            <person name="Abe K."/>
            <person name="Kamihara K."/>
            <person name="Katsuta N."/>
            <person name="Sato K."/>
            <person name="Tanikawa M."/>
            <person name="Yamazaki M."/>
            <person name="Ninomiya K."/>
            <person name="Ishibashi T."/>
            <person name="Yamashita H."/>
            <person name="Murakawa K."/>
            <person name="Fujimori K."/>
            <person name="Tanai H."/>
            <person name="Kimata M."/>
            <person name="Watanabe M."/>
            <person name="Hiraoka S."/>
            <person name="Chiba Y."/>
            <person name="Ishida S."/>
            <person name="Ono Y."/>
            <person name="Takiguchi S."/>
            <person name="Watanabe S."/>
            <person name="Yosida M."/>
            <person name="Hotuta T."/>
            <person name="Kusano J."/>
            <person name="Kanehori K."/>
            <person name="Takahashi-Fujii A."/>
            <person name="Hara H."/>
            <person name="Tanase T.-O."/>
            <person name="Nomura Y."/>
            <person name="Togiya S."/>
            <person name="Komai F."/>
            <person name="Hara R."/>
            <person name="Takeuchi K."/>
            <person name="Arita M."/>
            <person name="Imose N."/>
            <person name="Musashino K."/>
            <person name="Yuuki H."/>
            <person name="Oshima A."/>
            <person name="Sasaki N."/>
            <person name="Aotsuka S."/>
            <person name="Yoshikawa Y."/>
            <person name="Matsunawa H."/>
            <person name="Ichihara T."/>
            <person name="Shiohata N."/>
            <person name="Sano S."/>
            <person name="Moriya S."/>
            <person name="Momiyama H."/>
            <person name="Satoh N."/>
            <person name="Takami S."/>
            <person name="Terashima Y."/>
            <person name="Suzuki O."/>
            <person name="Nakagawa S."/>
            <person name="Senoh A."/>
            <person name="Mizoguchi H."/>
            <person name="Goto Y."/>
            <person name="Shimizu F."/>
            <person name="Wakebe H."/>
            <person name="Hishigaki H."/>
            <person name="Watanabe T."/>
            <person name="Sugiyama A."/>
            <person name="Takemoto M."/>
            <person name="Kawakami B."/>
            <person name="Yamazaki M."/>
            <person name="Watanabe K."/>
            <person name="Kumagai A."/>
            <person name="Itakura S."/>
            <person name="Fukuzumi Y."/>
            <person name="Fujimori Y."/>
            <person name="Komiyama M."/>
            <person name="Tashiro H."/>
            <person name="Tanigami A."/>
            <person name="Fujiwara T."/>
            <person name="Ono T."/>
            <person name="Yamada K."/>
            <person name="Fujii Y."/>
            <person name="Ozaki K."/>
            <person name="Hirao M."/>
            <person name="Ohmori Y."/>
            <person name="Kawabata A."/>
            <person name="Hikiji T."/>
            <person name="Kobatake N."/>
            <person name="Inagaki H."/>
            <person name="Ikema Y."/>
            <person name="Okamoto S."/>
            <person name="Okitani R."/>
            <person name="Kawakami T."/>
            <person name="Noguchi S."/>
            <person name="Itoh T."/>
            <person name="Shigeta K."/>
            <person name="Senba T."/>
            <person name="Matsumura K."/>
            <person name="Nakajima Y."/>
            <person name="Mizuno T."/>
            <person name="Morinaga M."/>
            <person name="Sasaki M."/>
            <person name="Togashi T."/>
            <person name="Oyama M."/>
            <person name="Hata H."/>
            <person name="Watanabe M."/>
            <person name="Komatsu T."/>
            <person name="Mizushima-Sugano J."/>
            <person name="Satoh T."/>
            <person name="Shirai Y."/>
            <person name="Takahashi Y."/>
            <person name="Nakagawa K."/>
            <person name="Okumura K."/>
            <person name="Nagase T."/>
            <person name="Nomura N."/>
            <person name="Kikuchi H."/>
            <person name="Masuho Y."/>
            <person name="Yamashita R."/>
            <person name="Nakai K."/>
            <person name="Yada T."/>
            <person name="Nakamura Y."/>
            <person name="Ohara O."/>
            <person name="Isogai T."/>
            <person name="Sugano S."/>
        </authorList>
    </citation>
    <scope>NUCLEOTIDE SEQUENCE [LARGE SCALE MRNA]</scope>
    <source>
        <tissue>Umbilical cord blood</tissue>
    </source>
</reference>
<reference key="11">
    <citation type="submission" date="2005-09" db="EMBL/GenBank/DDBJ databases">
        <authorList>
            <person name="Mural R.J."/>
            <person name="Istrail S."/>
            <person name="Sutton G.G."/>
            <person name="Florea L."/>
            <person name="Halpern A.L."/>
            <person name="Mobarry C.M."/>
            <person name="Lippert R."/>
            <person name="Walenz B."/>
            <person name="Shatkay H."/>
            <person name="Dew I."/>
            <person name="Miller J.R."/>
            <person name="Flanigan M.J."/>
            <person name="Edwards N.J."/>
            <person name="Bolanos R."/>
            <person name="Fasulo D."/>
            <person name="Halldorsson B.V."/>
            <person name="Hannenhalli S."/>
            <person name="Turner R."/>
            <person name="Yooseph S."/>
            <person name="Lu F."/>
            <person name="Nusskern D.R."/>
            <person name="Shue B.C."/>
            <person name="Zheng X.H."/>
            <person name="Zhong F."/>
            <person name="Delcher A.L."/>
            <person name="Huson D.H."/>
            <person name="Kravitz S.A."/>
            <person name="Mouchard L."/>
            <person name="Reinert K."/>
            <person name="Remington K.A."/>
            <person name="Clark A.G."/>
            <person name="Waterman M.S."/>
            <person name="Eichler E.E."/>
            <person name="Adams M.D."/>
            <person name="Hunkapiller M.W."/>
            <person name="Myers E.W."/>
            <person name="Venter J.C."/>
        </authorList>
    </citation>
    <scope>NUCLEOTIDE SEQUENCE [LARGE SCALE GENOMIC DNA]</scope>
</reference>
<reference key="12">
    <citation type="journal article" date="2004" name="Genome Res.">
        <title>The status, quality, and expansion of the NIH full-length cDNA project: the Mammalian Gene Collection (MGC).</title>
        <authorList>
            <consortium name="The MGC Project Team"/>
        </authorList>
    </citation>
    <scope>NUCLEOTIDE SEQUENCE [LARGE SCALE MRNA]</scope>
    <source>
        <tissue>Brain</tissue>
        <tissue>Lymph</tissue>
    </source>
</reference>
<reference key="13">
    <citation type="journal article" date="2006" name="J. Immunol.">
        <title>Platelet-activating factor-induced clathrin-mediated endocytosis requires beta-arrestin-1 recruitment and activation of the p38 MAPK signalosome at the plasma membrane for actin bundle formation.</title>
        <authorList>
            <person name="McLaughlin N.J."/>
            <person name="Banerjee A."/>
            <person name="Kelher M.R."/>
            <person name="Gamboni-Robertson F."/>
            <person name="Hamiel C."/>
            <person name="Sheppard F.R."/>
            <person name="Moore E.E."/>
            <person name="Silliman C.C."/>
        </authorList>
    </citation>
    <scope>INTERACTION WITH ARRB1</scope>
</reference>
<reference key="14">
    <citation type="journal article" date="1999" name="Nat. Genet.">
        <title>Characterization of single-nucleotide polymorphisms in coding regions of human genes.</title>
        <authorList>
            <person name="Cargill M."/>
            <person name="Altshuler D."/>
            <person name="Ireland J."/>
            <person name="Sklar P."/>
            <person name="Ardlie K."/>
            <person name="Patil N."/>
            <person name="Shaw N."/>
            <person name="Lane C.R."/>
            <person name="Lim E.P."/>
            <person name="Kalyanaraman N."/>
            <person name="Nemesh J."/>
            <person name="Ziaugra L."/>
            <person name="Friedland L."/>
            <person name="Rolfe A."/>
            <person name="Warrington J."/>
            <person name="Lipshutz R."/>
            <person name="Daley G.Q."/>
            <person name="Lander E.S."/>
        </authorList>
    </citation>
    <scope>VARIANTS ASP-224 AND SER-338</scope>
</reference>
<reference key="15">
    <citation type="journal article" date="1999" name="Nat. Genet.">
        <authorList>
            <person name="Cargill M."/>
            <person name="Altshuler D."/>
            <person name="Ireland J."/>
            <person name="Sklar P."/>
            <person name="Ardlie K."/>
            <person name="Patil N."/>
            <person name="Shaw N."/>
            <person name="Lane C.R."/>
            <person name="Lim E.P."/>
            <person name="Kalyanaraman N."/>
            <person name="Nemesh J."/>
            <person name="Ziaugra L."/>
            <person name="Friedland L."/>
            <person name="Rolfe A."/>
            <person name="Warrington J."/>
            <person name="Lipshutz R."/>
            <person name="Daley G.Q."/>
            <person name="Lander E.S."/>
        </authorList>
    </citation>
    <scope>ERRATUM OF PUBMED:10391209</scope>
</reference>
<dbReference type="EMBL" id="M80436">
    <property type="protein sequence ID" value="AAA60001.1"/>
    <property type="molecule type" value="mRNA"/>
</dbReference>
<dbReference type="EMBL" id="D10202">
    <property type="protein sequence ID" value="BAA01050.1"/>
    <property type="molecule type" value="mRNA"/>
</dbReference>
<dbReference type="EMBL" id="M76674">
    <property type="protein sequence ID" value="AAA60002.1"/>
    <property type="molecule type" value="mRNA"/>
</dbReference>
<dbReference type="EMBL" id="M88177">
    <property type="protein sequence ID" value="AAA60214.1"/>
    <property type="molecule type" value="Genomic_DNA"/>
</dbReference>
<dbReference type="EMBL" id="S52624">
    <property type="protein sequence ID" value="AAB24695.2"/>
    <property type="molecule type" value="mRNA"/>
</dbReference>
<dbReference type="EMBL" id="L07334">
    <property type="protein sequence ID" value="AAA60108.1"/>
    <property type="molecule type" value="mRNA"/>
</dbReference>
<dbReference type="EMBL" id="S56396">
    <property type="protein sequence ID" value="AAB25755.1"/>
    <property type="molecule type" value="Genomic_DNA"/>
</dbReference>
<dbReference type="EMBL" id="AY275466">
    <property type="protein sequence ID" value="AAP32298.1"/>
    <property type="molecule type" value="mRNA"/>
</dbReference>
<dbReference type="EMBL" id="BT009801">
    <property type="protein sequence ID" value="AAP88803.1"/>
    <property type="molecule type" value="mRNA"/>
</dbReference>
<dbReference type="EMBL" id="AK290240">
    <property type="protein sequence ID" value="BAF82929.1"/>
    <property type="molecule type" value="mRNA"/>
</dbReference>
<dbReference type="EMBL" id="CH471059">
    <property type="protein sequence ID" value="EAX07711.1"/>
    <property type="molecule type" value="Genomic_DNA"/>
</dbReference>
<dbReference type="EMBL" id="BC013816">
    <property type="protein sequence ID" value="AAH13816.1"/>
    <property type="molecule type" value="mRNA"/>
</dbReference>
<dbReference type="EMBL" id="BC063000">
    <property type="protein sequence ID" value="AAH63000.1"/>
    <property type="molecule type" value="mRNA"/>
</dbReference>
<dbReference type="CCDS" id="CCDS318.1"/>
<dbReference type="PIR" id="A40191">
    <property type="entry name" value="A40191"/>
</dbReference>
<dbReference type="RefSeq" id="NP_000943.1">
    <property type="nucleotide sequence ID" value="NM_000952.5"/>
</dbReference>
<dbReference type="RefSeq" id="NP_001158193.1">
    <property type="nucleotide sequence ID" value="NM_001164721.2"/>
</dbReference>
<dbReference type="RefSeq" id="NP_001158194.1">
    <property type="nucleotide sequence ID" value="NM_001164722.3"/>
</dbReference>
<dbReference type="RefSeq" id="NP_001158195.1">
    <property type="nucleotide sequence ID" value="NM_001164723.3"/>
</dbReference>
<dbReference type="PDB" id="5ZKP">
    <property type="method" value="X-ray"/>
    <property type="resolution" value="2.81 A"/>
    <property type="chains" value="A=6-216"/>
</dbReference>
<dbReference type="PDB" id="5ZKQ">
    <property type="method" value="X-ray"/>
    <property type="resolution" value="2.90 A"/>
    <property type="chains" value="A/B=2-218"/>
</dbReference>
<dbReference type="PDB" id="8XYD">
    <property type="method" value="EM"/>
    <property type="resolution" value="2.90 A"/>
    <property type="chains" value="A=1-342"/>
</dbReference>
<dbReference type="PDBsum" id="5ZKP"/>
<dbReference type="PDBsum" id="5ZKQ"/>
<dbReference type="PDBsum" id="8XYD"/>
<dbReference type="EMDB" id="EMD-38769"/>
<dbReference type="SMR" id="P25105"/>
<dbReference type="BioGRID" id="111696">
    <property type="interactions" value="50"/>
</dbReference>
<dbReference type="CORUM" id="P25105"/>
<dbReference type="FunCoup" id="P25105">
    <property type="interactions" value="884"/>
</dbReference>
<dbReference type="IntAct" id="P25105">
    <property type="interactions" value="42"/>
</dbReference>
<dbReference type="MINT" id="P25105"/>
<dbReference type="STRING" id="9606.ENSP00000442658"/>
<dbReference type="BindingDB" id="P25105"/>
<dbReference type="ChEMBL" id="CHEMBL250"/>
<dbReference type="DrugBank" id="DB06251">
    <property type="generic name" value="Dersalazine"/>
</dbReference>
<dbReference type="DrugBank" id="DB09166">
    <property type="generic name" value="Etizolam"/>
</dbReference>
<dbReference type="DrugBank" id="DB02261">
    <property type="generic name" value="Platelet Activating Factor"/>
</dbReference>
<dbReference type="DrugBank" id="DB11614">
    <property type="generic name" value="Rupatadine"/>
</dbReference>
<dbReference type="DrugBank" id="DB00208">
    <property type="generic name" value="Ticlopidine"/>
</dbReference>
<dbReference type="DrugCentral" id="P25105"/>
<dbReference type="GuidetoPHARMACOLOGY" id="334"/>
<dbReference type="SwissLipids" id="SLP:000001565"/>
<dbReference type="TCDB" id="9.A.14.13.3">
    <property type="family name" value="the g-protein-coupled receptor (gpcr) family"/>
</dbReference>
<dbReference type="GlyCosmos" id="P25105">
    <property type="glycosylation" value="1 site, No reported glycans"/>
</dbReference>
<dbReference type="GlyGen" id="P25105">
    <property type="glycosylation" value="1 site"/>
</dbReference>
<dbReference type="iPTMnet" id="P25105"/>
<dbReference type="PhosphoSitePlus" id="P25105"/>
<dbReference type="BioMuta" id="PTAFR"/>
<dbReference type="DMDM" id="129557"/>
<dbReference type="jPOST" id="P25105"/>
<dbReference type="MassIVE" id="P25105"/>
<dbReference type="PaxDb" id="9606-ENSP00000362965"/>
<dbReference type="PeptideAtlas" id="P25105"/>
<dbReference type="ProteomicsDB" id="54261"/>
<dbReference type="ABCD" id="P25105">
    <property type="antibodies" value="1 sequenced antibody"/>
</dbReference>
<dbReference type="Antibodypedia" id="30903">
    <property type="antibodies" value="179 antibodies from 26 providers"/>
</dbReference>
<dbReference type="DNASU" id="5724"/>
<dbReference type="Ensembl" id="ENST00000305392.3">
    <property type="protein sequence ID" value="ENSP00000301974.3"/>
    <property type="gene ID" value="ENSG00000169403.12"/>
</dbReference>
<dbReference type="Ensembl" id="ENST00000373857.8">
    <property type="protein sequence ID" value="ENSP00000362965.3"/>
    <property type="gene ID" value="ENSG00000169403.12"/>
</dbReference>
<dbReference type="Ensembl" id="ENST00000539896.1">
    <property type="protein sequence ID" value="ENSP00000442658.1"/>
    <property type="gene ID" value="ENSG00000169403.12"/>
</dbReference>
<dbReference type="GeneID" id="5724"/>
<dbReference type="KEGG" id="hsa:5724"/>
<dbReference type="MANE-Select" id="ENST00000373857.8">
    <property type="protein sequence ID" value="ENSP00000362965.3"/>
    <property type="RefSeq nucleotide sequence ID" value="NM_000952.5"/>
    <property type="RefSeq protein sequence ID" value="NP_000943.1"/>
</dbReference>
<dbReference type="UCSC" id="uc001bpl.4">
    <property type="organism name" value="human"/>
</dbReference>
<dbReference type="AGR" id="HGNC:9582"/>
<dbReference type="CTD" id="5724"/>
<dbReference type="DisGeNET" id="5724"/>
<dbReference type="GeneCards" id="PTAFR"/>
<dbReference type="HGNC" id="HGNC:9582">
    <property type="gene designation" value="PTAFR"/>
</dbReference>
<dbReference type="HPA" id="ENSG00000169403">
    <property type="expression patterns" value="Tissue enhanced (bone marrow, lymphoid tissue)"/>
</dbReference>
<dbReference type="MIM" id="173393">
    <property type="type" value="gene"/>
</dbReference>
<dbReference type="neXtProt" id="NX_P25105"/>
<dbReference type="OpenTargets" id="ENSG00000169403"/>
<dbReference type="PharmGKB" id="PA33933"/>
<dbReference type="VEuPathDB" id="HostDB:ENSG00000169403"/>
<dbReference type="eggNOG" id="ENOG502QTQI">
    <property type="taxonomic scope" value="Eukaryota"/>
</dbReference>
<dbReference type="GeneTree" id="ENSGT01110000267167"/>
<dbReference type="HOGENOM" id="CLU_009579_8_2_1"/>
<dbReference type="InParanoid" id="P25105"/>
<dbReference type="OMA" id="WNIVIIR"/>
<dbReference type="OrthoDB" id="5985406at2759"/>
<dbReference type="PAN-GO" id="P25105">
    <property type="GO annotations" value="2 GO annotations based on evolutionary models"/>
</dbReference>
<dbReference type="PhylomeDB" id="P25105"/>
<dbReference type="TreeFam" id="TF350009"/>
<dbReference type="PathwayCommons" id="P25105"/>
<dbReference type="Reactome" id="R-HSA-373076">
    <property type="pathway name" value="Class A/1 (Rhodopsin-like receptors)"/>
</dbReference>
<dbReference type="Reactome" id="R-HSA-416476">
    <property type="pathway name" value="G alpha (q) signalling events"/>
</dbReference>
<dbReference type="Reactome" id="R-HSA-6783783">
    <property type="pathway name" value="Interleukin-10 signaling"/>
</dbReference>
<dbReference type="Reactome" id="R-HSA-6798695">
    <property type="pathway name" value="Neutrophil degranulation"/>
</dbReference>
<dbReference type="Reactome" id="R-HSA-877300">
    <property type="pathway name" value="Interferon gamma signaling"/>
</dbReference>
<dbReference type="SignaLink" id="P25105"/>
<dbReference type="SIGNOR" id="P25105"/>
<dbReference type="BioGRID-ORCS" id="5724">
    <property type="hits" value="7 hits in 1158 CRISPR screens"/>
</dbReference>
<dbReference type="ChiTaRS" id="PTAFR">
    <property type="organism name" value="human"/>
</dbReference>
<dbReference type="GeneWiki" id="Platelet-activating_factor_receptor"/>
<dbReference type="GenomeRNAi" id="5724"/>
<dbReference type="Pharos" id="P25105">
    <property type="development level" value="Tchem"/>
</dbReference>
<dbReference type="PRO" id="PR:P25105"/>
<dbReference type="Proteomes" id="UP000005640">
    <property type="component" value="Chromosome 1"/>
</dbReference>
<dbReference type="RNAct" id="P25105">
    <property type="molecule type" value="protein"/>
</dbReference>
<dbReference type="Bgee" id="ENSG00000169403">
    <property type="expression patterns" value="Expressed in monocyte and 193 other cell types or tissues"/>
</dbReference>
<dbReference type="GO" id="GO:0016020">
    <property type="term" value="C:membrane"/>
    <property type="evidence" value="ECO:0000303"/>
    <property type="project" value="UniProtKB"/>
</dbReference>
<dbReference type="GO" id="GO:0005886">
    <property type="term" value="C:plasma membrane"/>
    <property type="evidence" value="ECO:0000304"/>
    <property type="project" value="Reactome"/>
</dbReference>
<dbReference type="GO" id="GO:0030667">
    <property type="term" value="C:secretory granule membrane"/>
    <property type="evidence" value="ECO:0000304"/>
    <property type="project" value="Reactome"/>
</dbReference>
<dbReference type="GO" id="GO:0070821">
    <property type="term" value="C:tertiary granule membrane"/>
    <property type="evidence" value="ECO:0000304"/>
    <property type="project" value="Reactome"/>
</dbReference>
<dbReference type="GO" id="GO:0045028">
    <property type="term" value="F:G protein-coupled purinergic nucleotide receptor activity"/>
    <property type="evidence" value="ECO:0000318"/>
    <property type="project" value="GO_Central"/>
</dbReference>
<dbReference type="GO" id="GO:0004930">
    <property type="term" value="F:G protein-coupled receptor activity"/>
    <property type="evidence" value="ECO:0000304"/>
    <property type="project" value="ProtInc"/>
</dbReference>
<dbReference type="GO" id="GO:0001530">
    <property type="term" value="F:lipopolysaccharide binding"/>
    <property type="evidence" value="ECO:0007669"/>
    <property type="project" value="Ensembl"/>
</dbReference>
<dbReference type="GO" id="GO:0001875">
    <property type="term" value="F:lipopolysaccharide immune receptor activity"/>
    <property type="evidence" value="ECO:0007669"/>
    <property type="project" value="Ensembl"/>
</dbReference>
<dbReference type="GO" id="GO:0005543">
    <property type="term" value="F:phospholipid binding"/>
    <property type="evidence" value="ECO:0000314"/>
    <property type="project" value="UniProtKB"/>
</dbReference>
<dbReference type="GO" id="GO:0004992">
    <property type="term" value="F:platelet activating factor receptor activity"/>
    <property type="evidence" value="ECO:0000314"/>
    <property type="project" value="UniProtKB"/>
</dbReference>
<dbReference type="GO" id="GO:0006935">
    <property type="term" value="P:chemotaxis"/>
    <property type="evidence" value="ECO:0000304"/>
    <property type="project" value="ProtInc"/>
</dbReference>
<dbReference type="GO" id="GO:0007186">
    <property type="term" value="P:G protein-coupled receptor signaling pathway"/>
    <property type="evidence" value="ECO:0000318"/>
    <property type="project" value="GO_Central"/>
</dbReference>
<dbReference type="GO" id="GO:0006955">
    <property type="term" value="P:immune response"/>
    <property type="evidence" value="ECO:0000304"/>
    <property type="project" value="ProtInc"/>
</dbReference>
<dbReference type="GO" id="GO:0006954">
    <property type="term" value="P:inflammatory response"/>
    <property type="evidence" value="ECO:0000304"/>
    <property type="project" value="ProtInc"/>
</dbReference>
<dbReference type="GO" id="GO:0032959">
    <property type="term" value="P:inositol trisphosphate biosynthetic process"/>
    <property type="evidence" value="ECO:0007669"/>
    <property type="project" value="Ensembl"/>
</dbReference>
<dbReference type="GO" id="GO:0007200">
    <property type="term" value="P:phospholipase C-activating G protein-coupled receptor signaling pathway"/>
    <property type="evidence" value="ECO:0000315"/>
    <property type="project" value="UniProtKB"/>
</dbReference>
<dbReference type="CDD" id="cd15147">
    <property type="entry name" value="7tmA_PAFR"/>
    <property type="match status" value="1"/>
</dbReference>
<dbReference type="FunFam" id="1.20.1070.10:FF:000204">
    <property type="entry name" value="platelet-activating factor receptor"/>
    <property type="match status" value="1"/>
</dbReference>
<dbReference type="Gene3D" id="1.20.1070.10">
    <property type="entry name" value="Rhodopsin 7-helix transmembrane proteins"/>
    <property type="match status" value="1"/>
</dbReference>
<dbReference type="InterPro" id="IPR000276">
    <property type="entry name" value="GPCR_Rhodpsn"/>
</dbReference>
<dbReference type="InterPro" id="IPR017452">
    <property type="entry name" value="GPCR_Rhodpsn_7TM"/>
</dbReference>
<dbReference type="InterPro" id="IPR002282">
    <property type="entry name" value="PAF_rcpt"/>
</dbReference>
<dbReference type="PANTHER" id="PTHR24233">
    <property type="entry name" value="P2Y PURINOCEPTOR-RELATED G-PROTEIN COUPLED RECEPTOR"/>
    <property type="match status" value="1"/>
</dbReference>
<dbReference type="PANTHER" id="PTHR24233:SF6">
    <property type="entry name" value="PLATELET-ACTIVATING FACTOR RECEPTOR"/>
    <property type="match status" value="1"/>
</dbReference>
<dbReference type="Pfam" id="PF00001">
    <property type="entry name" value="7tm_1"/>
    <property type="match status" value="1"/>
</dbReference>
<dbReference type="PRINTS" id="PR00237">
    <property type="entry name" value="GPCRRHODOPSN"/>
</dbReference>
<dbReference type="PRINTS" id="PR01153">
    <property type="entry name" value="PAFRECEPTOR"/>
</dbReference>
<dbReference type="SUPFAM" id="SSF81321">
    <property type="entry name" value="Family A G protein-coupled receptor-like"/>
    <property type="match status" value="1"/>
</dbReference>
<dbReference type="PROSITE" id="PS00237">
    <property type="entry name" value="G_PROTEIN_RECEP_F1_1"/>
    <property type="match status" value="1"/>
</dbReference>
<dbReference type="PROSITE" id="PS50262">
    <property type="entry name" value="G_PROTEIN_RECEP_F1_2"/>
    <property type="match status" value="1"/>
</dbReference>
<gene>
    <name type="primary">PTAFR</name>
    <name type="synonym">PAFR</name>
</gene>